<proteinExistence type="evidence at protein level"/>
<gene>
    <name evidence="2" type="primary">Rex1bd</name>
</gene>
<protein>
    <recommendedName>
        <fullName evidence="1">Required for excision 1-B domain-containing protein</fullName>
    </recommendedName>
</protein>
<sequence length="169" mass="18706">MLTAATEVLAAADGPGSAESAWAWRDAPIATLVQRIQQLQNERAQAFRRLDQAHRQYLLSGQHYDFPSYRSVVHEVTQAFAAASREVLAVEAELAGPRAQPVLARHVRSLQELEQTRLATVALLQVMGTPGVSEQDPEKLHQLKIKVIKTMEAIGEVLQELRFDAESAE</sequence>
<reference key="1">
    <citation type="journal article" date="2005" name="Science">
        <title>The transcriptional landscape of the mammalian genome.</title>
        <authorList>
            <person name="Carninci P."/>
            <person name="Kasukawa T."/>
            <person name="Katayama S."/>
            <person name="Gough J."/>
            <person name="Frith M.C."/>
            <person name="Maeda N."/>
            <person name="Oyama R."/>
            <person name="Ravasi T."/>
            <person name="Lenhard B."/>
            <person name="Wells C."/>
            <person name="Kodzius R."/>
            <person name="Shimokawa K."/>
            <person name="Bajic V.B."/>
            <person name="Brenner S.E."/>
            <person name="Batalov S."/>
            <person name="Forrest A.R."/>
            <person name="Zavolan M."/>
            <person name="Davis M.J."/>
            <person name="Wilming L.G."/>
            <person name="Aidinis V."/>
            <person name="Allen J.E."/>
            <person name="Ambesi-Impiombato A."/>
            <person name="Apweiler R."/>
            <person name="Aturaliya R.N."/>
            <person name="Bailey T.L."/>
            <person name="Bansal M."/>
            <person name="Baxter L."/>
            <person name="Beisel K.W."/>
            <person name="Bersano T."/>
            <person name="Bono H."/>
            <person name="Chalk A.M."/>
            <person name="Chiu K.P."/>
            <person name="Choudhary V."/>
            <person name="Christoffels A."/>
            <person name="Clutterbuck D.R."/>
            <person name="Crowe M.L."/>
            <person name="Dalla E."/>
            <person name="Dalrymple B.P."/>
            <person name="de Bono B."/>
            <person name="Della Gatta G."/>
            <person name="di Bernardo D."/>
            <person name="Down T."/>
            <person name="Engstrom P."/>
            <person name="Fagiolini M."/>
            <person name="Faulkner G."/>
            <person name="Fletcher C.F."/>
            <person name="Fukushima T."/>
            <person name="Furuno M."/>
            <person name="Futaki S."/>
            <person name="Gariboldi M."/>
            <person name="Georgii-Hemming P."/>
            <person name="Gingeras T.R."/>
            <person name="Gojobori T."/>
            <person name="Green R.E."/>
            <person name="Gustincich S."/>
            <person name="Harbers M."/>
            <person name="Hayashi Y."/>
            <person name="Hensch T.K."/>
            <person name="Hirokawa N."/>
            <person name="Hill D."/>
            <person name="Huminiecki L."/>
            <person name="Iacono M."/>
            <person name="Ikeo K."/>
            <person name="Iwama A."/>
            <person name="Ishikawa T."/>
            <person name="Jakt M."/>
            <person name="Kanapin A."/>
            <person name="Katoh M."/>
            <person name="Kawasawa Y."/>
            <person name="Kelso J."/>
            <person name="Kitamura H."/>
            <person name="Kitano H."/>
            <person name="Kollias G."/>
            <person name="Krishnan S.P."/>
            <person name="Kruger A."/>
            <person name="Kummerfeld S.K."/>
            <person name="Kurochkin I.V."/>
            <person name="Lareau L.F."/>
            <person name="Lazarevic D."/>
            <person name="Lipovich L."/>
            <person name="Liu J."/>
            <person name="Liuni S."/>
            <person name="McWilliam S."/>
            <person name="Madan Babu M."/>
            <person name="Madera M."/>
            <person name="Marchionni L."/>
            <person name="Matsuda H."/>
            <person name="Matsuzawa S."/>
            <person name="Miki H."/>
            <person name="Mignone F."/>
            <person name="Miyake S."/>
            <person name="Morris K."/>
            <person name="Mottagui-Tabar S."/>
            <person name="Mulder N."/>
            <person name="Nakano N."/>
            <person name="Nakauchi H."/>
            <person name="Ng P."/>
            <person name="Nilsson R."/>
            <person name="Nishiguchi S."/>
            <person name="Nishikawa S."/>
            <person name="Nori F."/>
            <person name="Ohara O."/>
            <person name="Okazaki Y."/>
            <person name="Orlando V."/>
            <person name="Pang K.C."/>
            <person name="Pavan W.J."/>
            <person name="Pavesi G."/>
            <person name="Pesole G."/>
            <person name="Petrovsky N."/>
            <person name="Piazza S."/>
            <person name="Reed J."/>
            <person name="Reid J.F."/>
            <person name="Ring B.Z."/>
            <person name="Ringwald M."/>
            <person name="Rost B."/>
            <person name="Ruan Y."/>
            <person name="Salzberg S.L."/>
            <person name="Sandelin A."/>
            <person name="Schneider C."/>
            <person name="Schoenbach C."/>
            <person name="Sekiguchi K."/>
            <person name="Semple C.A."/>
            <person name="Seno S."/>
            <person name="Sessa L."/>
            <person name="Sheng Y."/>
            <person name="Shibata Y."/>
            <person name="Shimada H."/>
            <person name="Shimada K."/>
            <person name="Silva D."/>
            <person name="Sinclair B."/>
            <person name="Sperling S."/>
            <person name="Stupka E."/>
            <person name="Sugiura K."/>
            <person name="Sultana R."/>
            <person name="Takenaka Y."/>
            <person name="Taki K."/>
            <person name="Tammoja K."/>
            <person name="Tan S.L."/>
            <person name="Tang S."/>
            <person name="Taylor M.S."/>
            <person name="Tegner J."/>
            <person name="Teichmann S.A."/>
            <person name="Ueda H.R."/>
            <person name="van Nimwegen E."/>
            <person name="Verardo R."/>
            <person name="Wei C.L."/>
            <person name="Yagi K."/>
            <person name="Yamanishi H."/>
            <person name="Zabarovsky E."/>
            <person name="Zhu S."/>
            <person name="Zimmer A."/>
            <person name="Hide W."/>
            <person name="Bult C."/>
            <person name="Grimmond S.M."/>
            <person name="Teasdale R.D."/>
            <person name="Liu E.T."/>
            <person name="Brusic V."/>
            <person name="Quackenbush J."/>
            <person name="Wahlestedt C."/>
            <person name="Mattick J.S."/>
            <person name="Hume D.A."/>
            <person name="Kai C."/>
            <person name="Sasaki D."/>
            <person name="Tomaru Y."/>
            <person name="Fukuda S."/>
            <person name="Kanamori-Katayama M."/>
            <person name="Suzuki M."/>
            <person name="Aoki J."/>
            <person name="Arakawa T."/>
            <person name="Iida J."/>
            <person name="Imamura K."/>
            <person name="Itoh M."/>
            <person name="Kato T."/>
            <person name="Kawaji H."/>
            <person name="Kawagashira N."/>
            <person name="Kawashima T."/>
            <person name="Kojima M."/>
            <person name="Kondo S."/>
            <person name="Konno H."/>
            <person name="Nakano K."/>
            <person name="Ninomiya N."/>
            <person name="Nishio T."/>
            <person name="Okada M."/>
            <person name="Plessy C."/>
            <person name="Shibata K."/>
            <person name="Shiraki T."/>
            <person name="Suzuki S."/>
            <person name="Tagami M."/>
            <person name="Waki K."/>
            <person name="Watahiki A."/>
            <person name="Okamura-Oho Y."/>
            <person name="Suzuki H."/>
            <person name="Kawai J."/>
            <person name="Hayashizaki Y."/>
        </authorList>
    </citation>
    <scope>NUCLEOTIDE SEQUENCE [LARGE SCALE MRNA]</scope>
    <source>
        <strain>C57BL/6J</strain>
        <tissue>Embryo</tissue>
        <tissue>Tongue</tissue>
    </source>
</reference>
<reference key="2">
    <citation type="journal article" date="2004" name="Genome Res.">
        <title>The status, quality, and expansion of the NIH full-length cDNA project: the Mammalian Gene Collection (MGC).</title>
        <authorList>
            <consortium name="The MGC Project Team"/>
        </authorList>
    </citation>
    <scope>NUCLEOTIDE SEQUENCE [LARGE SCALE MRNA]</scope>
    <source>
        <tissue>Mammary gland</tissue>
    </source>
</reference>
<reference key="3">
    <citation type="journal article" date="2010" name="Cell">
        <title>A tissue-specific atlas of mouse protein phosphorylation and expression.</title>
        <authorList>
            <person name="Huttlin E.L."/>
            <person name="Jedrychowski M.P."/>
            <person name="Elias J.E."/>
            <person name="Goswami T."/>
            <person name="Rad R."/>
            <person name="Beausoleil S.A."/>
            <person name="Villen J."/>
            <person name="Haas W."/>
            <person name="Sowa M.E."/>
            <person name="Gygi S.P."/>
        </authorList>
    </citation>
    <scope>IDENTIFICATION BY MASS SPECTROMETRY [LARGE SCALE ANALYSIS]</scope>
    <source>
        <tissue>Liver</tissue>
        <tissue>Spleen</tissue>
    </source>
</reference>
<organism>
    <name type="scientific">Mus musculus</name>
    <name type="common">Mouse</name>
    <dbReference type="NCBI Taxonomy" id="10090"/>
    <lineage>
        <taxon>Eukaryota</taxon>
        <taxon>Metazoa</taxon>
        <taxon>Chordata</taxon>
        <taxon>Craniata</taxon>
        <taxon>Vertebrata</taxon>
        <taxon>Euteleostomi</taxon>
        <taxon>Mammalia</taxon>
        <taxon>Eutheria</taxon>
        <taxon>Euarchontoglires</taxon>
        <taxon>Glires</taxon>
        <taxon>Rodentia</taxon>
        <taxon>Myomorpha</taxon>
        <taxon>Muroidea</taxon>
        <taxon>Muridae</taxon>
        <taxon>Murinae</taxon>
        <taxon>Mus</taxon>
        <taxon>Mus</taxon>
    </lineage>
</organism>
<evidence type="ECO:0000305" key="1"/>
<evidence type="ECO:0000312" key="2">
    <source>
        <dbReference type="MGI" id="MGI:1913712"/>
    </source>
</evidence>
<dbReference type="EMBL" id="AK010635">
    <property type="protein sequence ID" value="BAB27079.1"/>
    <property type="status" value="ALT_FRAME"/>
    <property type="molecule type" value="mRNA"/>
</dbReference>
<dbReference type="EMBL" id="AK013181">
    <property type="protein sequence ID" value="BAB28696.1"/>
    <property type="molecule type" value="mRNA"/>
</dbReference>
<dbReference type="EMBL" id="AK160511">
    <property type="protein sequence ID" value="BAE35834.1"/>
    <property type="molecule type" value="mRNA"/>
</dbReference>
<dbReference type="EMBL" id="BC028495">
    <property type="protein sequence ID" value="AAH28495.1"/>
    <property type="molecule type" value="mRNA"/>
</dbReference>
<dbReference type="CCDS" id="CCDS22370.1"/>
<dbReference type="RefSeq" id="NP_079853.1">
    <property type="nucleotide sequence ID" value="NM_025577.3"/>
</dbReference>
<dbReference type="SMR" id="Q9CYZ6"/>
<dbReference type="FunCoup" id="Q9CYZ6">
    <property type="interactions" value="15"/>
</dbReference>
<dbReference type="STRING" id="10090.ENSMUSP00000074670"/>
<dbReference type="PhosphoSitePlus" id="Q9CYZ6"/>
<dbReference type="jPOST" id="Q9CYZ6"/>
<dbReference type="PaxDb" id="10090-ENSMUSP00000074670"/>
<dbReference type="PeptideAtlas" id="Q9CYZ6"/>
<dbReference type="ProteomicsDB" id="253215"/>
<dbReference type="Pumba" id="Q9CYZ6"/>
<dbReference type="Antibodypedia" id="51892">
    <property type="antibodies" value="7 antibodies from 6 providers"/>
</dbReference>
<dbReference type="DNASU" id="66462"/>
<dbReference type="Ensembl" id="ENSMUST00000075175.12">
    <property type="protein sequence ID" value="ENSMUSP00000074670.6"/>
    <property type="gene ID" value="ENSMUSG00000058833.12"/>
</dbReference>
<dbReference type="GeneID" id="66462"/>
<dbReference type="KEGG" id="mmu:66462"/>
<dbReference type="UCSC" id="uc009mal.1">
    <property type="organism name" value="mouse"/>
</dbReference>
<dbReference type="AGR" id="MGI:1913712"/>
<dbReference type="CTD" id="55049"/>
<dbReference type="MGI" id="MGI:1913712">
    <property type="gene designation" value="Rex1bd"/>
</dbReference>
<dbReference type="VEuPathDB" id="HostDB:ENSMUSG00000058833"/>
<dbReference type="eggNOG" id="ENOG502S01K">
    <property type="taxonomic scope" value="Eukaryota"/>
</dbReference>
<dbReference type="GeneTree" id="ENSGT00390000011631"/>
<dbReference type="HOGENOM" id="CLU_103386_0_0_1"/>
<dbReference type="InParanoid" id="Q9CYZ6"/>
<dbReference type="OMA" id="VQGLRAW"/>
<dbReference type="OrthoDB" id="434723at2759"/>
<dbReference type="PhylomeDB" id="Q9CYZ6"/>
<dbReference type="TreeFam" id="TF332536"/>
<dbReference type="BioGRID-ORCS" id="66462">
    <property type="hits" value="1 hit in 77 CRISPR screens"/>
</dbReference>
<dbReference type="ChiTaRS" id="Rex1bd">
    <property type="organism name" value="mouse"/>
</dbReference>
<dbReference type="PRO" id="PR:Q9CYZ6"/>
<dbReference type="Proteomes" id="UP000000589">
    <property type="component" value="Chromosome 8"/>
</dbReference>
<dbReference type="RNAct" id="Q9CYZ6">
    <property type="molecule type" value="protein"/>
</dbReference>
<dbReference type="Bgee" id="ENSMUSG00000058833">
    <property type="expression patterns" value="Expressed in hindlimb stylopod muscle and 263 other cell types or tissues"/>
</dbReference>
<dbReference type="ExpressionAtlas" id="Q9CYZ6">
    <property type="expression patterns" value="baseline and differential"/>
</dbReference>
<dbReference type="InterPro" id="IPR039491">
    <property type="entry name" value="REX1-B"/>
</dbReference>
<dbReference type="PANTHER" id="PTHR28309">
    <property type="entry name" value="REQUIRED FOR EXCISION 1-B DOMAIN-CONTAINING PROTEIN"/>
    <property type="match status" value="1"/>
</dbReference>
<dbReference type="PANTHER" id="PTHR28309:SF1">
    <property type="entry name" value="REQUIRED FOR EXCISION 1-B DOMAIN-CONTAINING PROTEIN"/>
    <property type="match status" value="1"/>
</dbReference>
<dbReference type="Pfam" id="PF14966">
    <property type="entry name" value="DNA_repr_REX1B"/>
    <property type="match status" value="1"/>
</dbReference>
<feature type="chain" id="PRO_0000305286" description="Required for excision 1-B domain-containing protein">
    <location>
        <begin position="1"/>
        <end position="169"/>
    </location>
</feature>
<feature type="sequence conflict" description="In Ref. 1; BAB27079." evidence="1" ref="1">
    <original>T</original>
    <variation>S</variation>
    <location>
        <position position="31"/>
    </location>
</feature>
<feature type="sequence conflict" description="In Ref. 1; BAB27079." evidence="1" ref="1">
    <original>A</original>
    <variation>T</variation>
    <location>
        <position position="44"/>
    </location>
</feature>
<comment type="sequence caution" evidence="1">
    <conflict type="frameshift">
        <sequence resource="EMBL-CDS" id="BAB27079"/>
    </conflict>
</comment>
<keyword id="KW-1185">Reference proteome</keyword>
<name>REX1B_MOUSE</name>
<accession>Q9CYZ6</accession>
<accession>Q3TUY7</accession>
<accession>Q9CRH2</accession>